<keyword id="KW-0002">3D-structure</keyword>
<keyword id="KW-0963">Cytoplasm</keyword>
<keyword id="KW-1185">Reference proteome</keyword>
<keyword id="KW-0687">Ribonucleoprotein</keyword>
<keyword id="KW-0689">Ribosomal protein</keyword>
<keyword id="KW-0698">rRNA processing</keyword>
<protein>
    <recommendedName>
        <fullName evidence="2">Small ribosomal subunit protein eS21</fullName>
    </recommendedName>
    <alternativeName>
        <fullName>40S ribosomal protein S21</fullName>
    </alternativeName>
    <alternativeName>
        <fullName>Cytoplasmic ribosomal protein 7</fullName>
    </alternativeName>
</protein>
<feature type="chain" id="PRO_0000194759" description="Small ribosomal subunit protein eS21">
    <location>
        <begin position="1"/>
        <end position="87"/>
    </location>
</feature>
<gene>
    <name type="primary">crp-7</name>
    <name type="synonym">rps21</name>
    <name type="ORF">NCU08627</name>
</gene>
<proteinExistence type="evidence at protein level"/>
<comment type="function">
    <text evidence="4">Component of the ribosome, a large ribonucleoprotein complex responsible for the synthesis of proteins in the cell. The small ribosomal subunit (SSU) binds messenger RNAs (mRNAs) and translates the encoded message by selecting cognate aminoacyl-transfer RNA (tRNA) molecules. The large subunit (LSU) contains the ribosomal catalytic site termed the peptidyl transferase center (PTC), which catalyzes the formation of peptide bonds, thereby polymerizing the amino acids delivered by tRNAs into a polypeptide chain. The nascent polypeptides leave the ribosome through a tunnel in the LSU and interact with protein factors that function in enzymatic processing, targeting, and the membrane insertion of nascent chains at the exit of the ribosomal tunnel.</text>
</comment>
<comment type="subunit">
    <text evidence="1">Component of the small ribosomal subunit (SSU). Mature N.crassa ribosomes consist of a small (40S) and a large (60S) subunit. The 40S small subunit contains 1 molecule of ribosomal RNA (18S rRNA) and at least 32 different proteins. The large 60S subunit contains 3 rRNA molecules (26S, 5.8S and 5S rRNA) and at least 42 different proteins.</text>
</comment>
<comment type="subcellular location">
    <subcellularLocation>
        <location evidence="1">Cytoplasm</location>
    </subcellularLocation>
</comment>
<comment type="similarity">
    <text evidence="3">Belongs to the eukaryotic ribosomal protein eS21 family.</text>
</comment>
<name>RS21_NEUCR</name>
<accession>O93798</accession>
<accession>Q7RVL3</accession>
<accession>V5IRT0</accession>
<sequence length="87" mass="9661">MENDRGEIVDLYVPRKCSATGRIIKSKDHGSCQITIAKVDENGRAIQGENIIYALSGFVRAMGESDDSLNRLAQRDGLLKAVWNPQR</sequence>
<evidence type="ECO:0000269" key="1">
    <source>
    </source>
</evidence>
<evidence type="ECO:0000303" key="2">
    <source>
    </source>
</evidence>
<evidence type="ECO:0000305" key="3"/>
<evidence type="ECO:0000305" key="4">
    <source>
    </source>
</evidence>
<reference key="1">
    <citation type="submission" date="1998-06" db="EMBL/GenBank/DDBJ databases">
        <authorList>
            <person name="Kusuda M."/>
        </authorList>
    </citation>
    <scope>NUCLEOTIDE SEQUENCE [GENOMIC DNA]</scope>
    <source>
        <strain>C1-T10-37A</strain>
    </source>
</reference>
<reference key="2">
    <citation type="journal article" date="2003" name="Nature">
        <title>The genome sequence of the filamentous fungus Neurospora crassa.</title>
        <authorList>
            <person name="Galagan J.E."/>
            <person name="Calvo S.E."/>
            <person name="Borkovich K.A."/>
            <person name="Selker E.U."/>
            <person name="Read N.D."/>
            <person name="Jaffe D.B."/>
            <person name="FitzHugh W."/>
            <person name="Ma L.-J."/>
            <person name="Smirnov S."/>
            <person name="Purcell S."/>
            <person name="Rehman B."/>
            <person name="Elkins T."/>
            <person name="Engels R."/>
            <person name="Wang S."/>
            <person name="Nielsen C.B."/>
            <person name="Butler J."/>
            <person name="Endrizzi M."/>
            <person name="Qui D."/>
            <person name="Ianakiev P."/>
            <person name="Bell-Pedersen D."/>
            <person name="Nelson M.A."/>
            <person name="Werner-Washburne M."/>
            <person name="Selitrennikoff C.P."/>
            <person name="Kinsey J.A."/>
            <person name="Braun E.L."/>
            <person name="Zelter A."/>
            <person name="Schulte U."/>
            <person name="Kothe G.O."/>
            <person name="Jedd G."/>
            <person name="Mewes H.-W."/>
            <person name="Staben C."/>
            <person name="Marcotte E."/>
            <person name="Greenberg D."/>
            <person name="Roy A."/>
            <person name="Foley K."/>
            <person name="Naylor J."/>
            <person name="Stange-Thomann N."/>
            <person name="Barrett R."/>
            <person name="Gnerre S."/>
            <person name="Kamal M."/>
            <person name="Kamvysselis M."/>
            <person name="Mauceli E.W."/>
            <person name="Bielke C."/>
            <person name="Rudd S."/>
            <person name="Frishman D."/>
            <person name="Krystofova S."/>
            <person name="Rasmussen C."/>
            <person name="Metzenberg R.L."/>
            <person name="Perkins D.D."/>
            <person name="Kroken S."/>
            <person name="Cogoni C."/>
            <person name="Macino G."/>
            <person name="Catcheside D.E.A."/>
            <person name="Li W."/>
            <person name="Pratt R.J."/>
            <person name="Osmani S.A."/>
            <person name="DeSouza C.P.C."/>
            <person name="Glass N.L."/>
            <person name="Orbach M.J."/>
            <person name="Berglund J.A."/>
            <person name="Voelker R."/>
            <person name="Yarden O."/>
            <person name="Plamann M."/>
            <person name="Seiler S."/>
            <person name="Dunlap J.C."/>
            <person name="Radford A."/>
            <person name="Aramayo R."/>
            <person name="Natvig D.O."/>
            <person name="Alex L.A."/>
            <person name="Mannhaupt G."/>
            <person name="Ebbole D.J."/>
            <person name="Freitag M."/>
            <person name="Paulsen I."/>
            <person name="Sachs M.S."/>
            <person name="Lander E.S."/>
            <person name="Nusbaum C."/>
            <person name="Birren B.W."/>
        </authorList>
    </citation>
    <scope>NUCLEOTIDE SEQUENCE [LARGE SCALE GENOMIC DNA]</scope>
    <source>
        <strain>ATCC 24698 / 74-OR23-1A / CBS 708.71 / DSM 1257 / FGSC 987</strain>
    </source>
</reference>
<reference key="3">
    <citation type="journal article" date="2021" name="Proc. Natl. Acad. Sci. U.S.A.">
        <title>Structure of the translating Neurospora ribosome arrested by cycloheximide.</title>
        <authorList>
            <person name="Shen L."/>
            <person name="Su Z."/>
            <person name="Yang K."/>
            <person name="Wu C."/>
            <person name="Becker T."/>
            <person name="Bell-Pedersen D."/>
            <person name="Zhang J."/>
            <person name="Sachs M.S."/>
        </authorList>
    </citation>
    <scope>STRUCTURE BY ELECTRON MICROSCOPY (2.70 ANGSTROMS)</scope>
</reference>
<dbReference type="EMBL" id="AB015207">
    <property type="protein sequence ID" value="BAA35061.1"/>
    <property type="molecule type" value="Genomic_DNA"/>
</dbReference>
<dbReference type="EMBL" id="CM002236">
    <property type="protein sequence ID" value="ESA44410.1"/>
    <property type="molecule type" value="Genomic_DNA"/>
</dbReference>
<dbReference type="EMBL" id="CM002236">
    <property type="protein sequence ID" value="ESA44411.1"/>
    <property type="molecule type" value="Genomic_DNA"/>
</dbReference>
<dbReference type="RefSeq" id="XP_011393215.1">
    <property type="nucleotide sequence ID" value="XM_011394913.1"/>
</dbReference>
<dbReference type="RefSeq" id="XP_011393216.1">
    <property type="nucleotide sequence ID" value="XM_011394914.1"/>
</dbReference>
<dbReference type="PDB" id="7R81">
    <property type="method" value="EM"/>
    <property type="resolution" value="2.70 A"/>
    <property type="chains" value="W2=1-87"/>
</dbReference>
<dbReference type="PDBsum" id="7R81"/>
<dbReference type="EMDB" id="EMD-24307"/>
<dbReference type="SMR" id="O93798"/>
<dbReference type="FunCoup" id="O93798">
    <property type="interactions" value="897"/>
</dbReference>
<dbReference type="STRING" id="367110.O93798"/>
<dbReference type="PaxDb" id="5141-EFNCRP00000008655"/>
<dbReference type="EnsemblFungi" id="ESA44410">
    <property type="protein sequence ID" value="ESA44410"/>
    <property type="gene ID" value="NCU08627"/>
</dbReference>
<dbReference type="EnsemblFungi" id="ESA44411">
    <property type="protein sequence ID" value="ESA44411"/>
    <property type="gene ID" value="NCU08627"/>
</dbReference>
<dbReference type="GeneID" id="3880995"/>
<dbReference type="KEGG" id="ncr:NCU08627"/>
<dbReference type="VEuPathDB" id="FungiDB:NCU08627"/>
<dbReference type="HOGENOM" id="CLU_167122_2_0_1"/>
<dbReference type="InParanoid" id="O93798"/>
<dbReference type="OMA" id="GESDACM"/>
<dbReference type="OrthoDB" id="278325at2759"/>
<dbReference type="Proteomes" id="UP000001805">
    <property type="component" value="Chromosome 1, Linkage Group I"/>
</dbReference>
<dbReference type="GO" id="GO:0022627">
    <property type="term" value="C:cytosolic small ribosomal subunit"/>
    <property type="evidence" value="ECO:0000318"/>
    <property type="project" value="GO_Central"/>
</dbReference>
<dbReference type="GO" id="GO:0003735">
    <property type="term" value="F:structural constituent of ribosome"/>
    <property type="evidence" value="ECO:0000318"/>
    <property type="project" value="GO_Central"/>
</dbReference>
<dbReference type="GO" id="GO:0000447">
    <property type="term" value="P:endonucleolytic cleavage in ITS1 to separate SSU-rRNA from 5.8S rRNA and LSU-rRNA from tricistronic rRNA transcript (SSU-rRNA, 5.8S rRNA, LSU-rRNA)"/>
    <property type="evidence" value="ECO:0000318"/>
    <property type="project" value="GO_Central"/>
</dbReference>
<dbReference type="GO" id="GO:0000461">
    <property type="term" value="P:endonucleolytic cleavage to generate mature 3'-end of SSU-rRNA from (SSU-rRNA, 5.8S rRNA, LSU-rRNA)"/>
    <property type="evidence" value="ECO:0000318"/>
    <property type="project" value="GO_Central"/>
</dbReference>
<dbReference type="GO" id="GO:0006412">
    <property type="term" value="P:translation"/>
    <property type="evidence" value="ECO:0007669"/>
    <property type="project" value="InterPro"/>
</dbReference>
<dbReference type="FunFam" id="3.30.1230.20:FF:000001">
    <property type="entry name" value="40S ribosomal protein S21"/>
    <property type="match status" value="1"/>
</dbReference>
<dbReference type="Gene3D" id="3.30.1230.20">
    <property type="match status" value="1"/>
</dbReference>
<dbReference type="InterPro" id="IPR001931">
    <property type="entry name" value="Ribosomal_eS21"/>
</dbReference>
<dbReference type="InterPro" id="IPR018279">
    <property type="entry name" value="Ribosomal_eS21_CS"/>
</dbReference>
<dbReference type="InterPro" id="IPR038579">
    <property type="entry name" value="Ribosomal_eS21_sf"/>
</dbReference>
<dbReference type="PANTHER" id="PTHR10442">
    <property type="entry name" value="40S RIBOSOMAL PROTEIN S21"/>
    <property type="match status" value="1"/>
</dbReference>
<dbReference type="Pfam" id="PF01249">
    <property type="entry name" value="Ribosomal_S21e"/>
    <property type="match status" value="1"/>
</dbReference>
<dbReference type="PIRSF" id="PIRSF002148">
    <property type="entry name" value="Ribosomal_S21e"/>
    <property type="match status" value="1"/>
</dbReference>
<dbReference type="PROSITE" id="PS00996">
    <property type="entry name" value="RIBOSOMAL_S21E"/>
    <property type="match status" value="1"/>
</dbReference>
<organism>
    <name type="scientific">Neurospora crassa (strain ATCC 24698 / 74-OR23-1A / CBS 708.71 / DSM 1257 / FGSC 987)</name>
    <dbReference type="NCBI Taxonomy" id="367110"/>
    <lineage>
        <taxon>Eukaryota</taxon>
        <taxon>Fungi</taxon>
        <taxon>Dikarya</taxon>
        <taxon>Ascomycota</taxon>
        <taxon>Pezizomycotina</taxon>
        <taxon>Sordariomycetes</taxon>
        <taxon>Sordariomycetidae</taxon>
        <taxon>Sordariales</taxon>
        <taxon>Sordariaceae</taxon>
        <taxon>Neurospora</taxon>
    </lineage>
</organism>